<feature type="chain" id="PRO_0000374436" description="tRNA-2-methylthio-N(6)-dimethylallyladenosine synthase">
    <location>
        <begin position="1"/>
        <end position="476"/>
    </location>
</feature>
<feature type="domain" description="MTTase N-terminal" evidence="1">
    <location>
        <begin position="5"/>
        <end position="122"/>
    </location>
</feature>
<feature type="domain" description="Radical SAM core" evidence="2">
    <location>
        <begin position="145"/>
        <end position="377"/>
    </location>
</feature>
<feature type="domain" description="TRAM" evidence="1">
    <location>
        <begin position="380"/>
        <end position="443"/>
    </location>
</feature>
<feature type="binding site" evidence="1">
    <location>
        <position position="14"/>
    </location>
    <ligand>
        <name>[4Fe-4S] cluster</name>
        <dbReference type="ChEBI" id="CHEBI:49883"/>
        <label>1</label>
    </ligand>
</feature>
<feature type="binding site" evidence="1">
    <location>
        <position position="51"/>
    </location>
    <ligand>
        <name>[4Fe-4S] cluster</name>
        <dbReference type="ChEBI" id="CHEBI:49883"/>
        <label>1</label>
    </ligand>
</feature>
<feature type="binding site" evidence="1">
    <location>
        <position position="85"/>
    </location>
    <ligand>
        <name>[4Fe-4S] cluster</name>
        <dbReference type="ChEBI" id="CHEBI:49883"/>
        <label>1</label>
    </ligand>
</feature>
<feature type="binding site" evidence="1">
    <location>
        <position position="159"/>
    </location>
    <ligand>
        <name>[4Fe-4S] cluster</name>
        <dbReference type="ChEBI" id="CHEBI:49883"/>
        <label>2</label>
        <note>4Fe-4S-S-AdoMet</note>
    </ligand>
</feature>
<feature type="binding site" evidence="1">
    <location>
        <position position="163"/>
    </location>
    <ligand>
        <name>[4Fe-4S] cluster</name>
        <dbReference type="ChEBI" id="CHEBI:49883"/>
        <label>2</label>
        <note>4Fe-4S-S-AdoMet</note>
    </ligand>
</feature>
<feature type="binding site" evidence="1">
    <location>
        <position position="166"/>
    </location>
    <ligand>
        <name>[4Fe-4S] cluster</name>
        <dbReference type="ChEBI" id="CHEBI:49883"/>
        <label>2</label>
        <note>4Fe-4S-S-AdoMet</note>
    </ligand>
</feature>
<evidence type="ECO:0000255" key="1">
    <source>
        <dbReference type="HAMAP-Rule" id="MF_01864"/>
    </source>
</evidence>
<evidence type="ECO:0000255" key="2">
    <source>
        <dbReference type="PROSITE-ProRule" id="PRU01266"/>
    </source>
</evidence>
<accession>Q7MB63</accession>
<proteinExistence type="inferred from homology"/>
<organism>
    <name type="scientific">Photorhabdus laumondii subsp. laumondii (strain DSM 15139 / CIP 105565 / TT01)</name>
    <name type="common">Photorhabdus luminescens subsp. laumondii</name>
    <dbReference type="NCBI Taxonomy" id="243265"/>
    <lineage>
        <taxon>Bacteria</taxon>
        <taxon>Pseudomonadati</taxon>
        <taxon>Pseudomonadota</taxon>
        <taxon>Gammaproteobacteria</taxon>
        <taxon>Enterobacterales</taxon>
        <taxon>Morganellaceae</taxon>
        <taxon>Photorhabdus</taxon>
    </lineage>
</organism>
<sequence>MSTIKKLYIKTWGCQMNEYDSSKMADLLESTHGYQLTDVAEEADILLLNTCSIREKAQEKVFHQLGRWKNLKDTNPDLIIGVGGCVASQEGDFIRQRAQCVDIIFGPQTLHRLPEMINQVKGTRSPVVDISFPEIEKFDRLPEPRAEGPSAFVSIMEGCNKYCTFCVVPYTRGEEVSRPCDDVLFEIAQLAAQGVREVNLLGQNVNAYRGATYDGDICSFAELIRLVAAIDGIDRIRFTTSHPIEFTDDIIAVYEDTPELVSFLHLPVQSGSDRILTLMKRAHTALEYKSIIRKLRKARPDILISSDFIIGFPGETQDDFEKTMKLIADVNFDMSYSFIYSARPGTPAADLPDDVSEEEKKQRLYLLQQRINQQAMSYSRAMLGSVQRILVEGTSRKNVMELSGRTENNRVVNFEGQPDMIGKFVDVEIVDVYANSLRGKVIRTEDQMDLRIHESPESVIARTRKEDEIGVGTYQP</sequence>
<comment type="function">
    <text evidence="1">Catalyzes the methylthiolation of N6-(dimethylallyl)adenosine (i(6)A), leading to the formation of 2-methylthio-N6-(dimethylallyl)adenosine (ms(2)i(6)A) at position 37 in tRNAs that read codons beginning with uridine.</text>
</comment>
<comment type="catalytic activity">
    <reaction evidence="1">
        <text>N(6)-dimethylallyladenosine(37) in tRNA + (sulfur carrier)-SH + AH2 + 2 S-adenosyl-L-methionine = 2-methylsulfanyl-N(6)-dimethylallyladenosine(37) in tRNA + (sulfur carrier)-H + 5'-deoxyadenosine + L-methionine + A + S-adenosyl-L-homocysteine + 2 H(+)</text>
        <dbReference type="Rhea" id="RHEA:37067"/>
        <dbReference type="Rhea" id="RHEA-COMP:10375"/>
        <dbReference type="Rhea" id="RHEA-COMP:10376"/>
        <dbReference type="Rhea" id="RHEA-COMP:14737"/>
        <dbReference type="Rhea" id="RHEA-COMP:14739"/>
        <dbReference type="ChEBI" id="CHEBI:13193"/>
        <dbReference type="ChEBI" id="CHEBI:15378"/>
        <dbReference type="ChEBI" id="CHEBI:17319"/>
        <dbReference type="ChEBI" id="CHEBI:17499"/>
        <dbReference type="ChEBI" id="CHEBI:29917"/>
        <dbReference type="ChEBI" id="CHEBI:57844"/>
        <dbReference type="ChEBI" id="CHEBI:57856"/>
        <dbReference type="ChEBI" id="CHEBI:59789"/>
        <dbReference type="ChEBI" id="CHEBI:64428"/>
        <dbReference type="ChEBI" id="CHEBI:74415"/>
        <dbReference type="ChEBI" id="CHEBI:74417"/>
        <dbReference type="EC" id="2.8.4.3"/>
    </reaction>
</comment>
<comment type="cofactor">
    <cofactor evidence="1">
        <name>[4Fe-4S] cluster</name>
        <dbReference type="ChEBI" id="CHEBI:49883"/>
    </cofactor>
    <text evidence="1">Binds 2 [4Fe-4S] clusters. One cluster is coordinated with 3 cysteines and an exchangeable S-adenosyl-L-methionine.</text>
</comment>
<comment type="subunit">
    <text evidence="1">Monomer.</text>
</comment>
<comment type="subcellular location">
    <subcellularLocation>
        <location evidence="1">Cytoplasm</location>
    </subcellularLocation>
</comment>
<comment type="similarity">
    <text evidence="1">Belongs to the methylthiotransferase family. MiaB subfamily.</text>
</comment>
<dbReference type="EC" id="2.8.4.3" evidence="1"/>
<dbReference type="EMBL" id="BX571863">
    <property type="protein sequence ID" value="CAE13606.1"/>
    <property type="molecule type" value="Genomic_DNA"/>
</dbReference>
<dbReference type="RefSeq" id="WP_011145636.1">
    <property type="nucleotide sequence ID" value="NC_005126.1"/>
</dbReference>
<dbReference type="SMR" id="Q7MB63"/>
<dbReference type="STRING" id="243265.plu1312"/>
<dbReference type="GeneID" id="48847590"/>
<dbReference type="KEGG" id="plu:plu1312"/>
<dbReference type="eggNOG" id="COG0621">
    <property type="taxonomic scope" value="Bacteria"/>
</dbReference>
<dbReference type="HOGENOM" id="CLU_018697_2_0_6"/>
<dbReference type="OrthoDB" id="9805215at2"/>
<dbReference type="Proteomes" id="UP000002514">
    <property type="component" value="Chromosome"/>
</dbReference>
<dbReference type="GO" id="GO:0005829">
    <property type="term" value="C:cytosol"/>
    <property type="evidence" value="ECO:0007669"/>
    <property type="project" value="TreeGrafter"/>
</dbReference>
<dbReference type="GO" id="GO:0051539">
    <property type="term" value="F:4 iron, 4 sulfur cluster binding"/>
    <property type="evidence" value="ECO:0007669"/>
    <property type="project" value="UniProtKB-UniRule"/>
</dbReference>
<dbReference type="GO" id="GO:0046872">
    <property type="term" value="F:metal ion binding"/>
    <property type="evidence" value="ECO:0007669"/>
    <property type="project" value="UniProtKB-KW"/>
</dbReference>
<dbReference type="GO" id="GO:0035597">
    <property type="term" value="F:N6-isopentenyladenosine methylthiotransferase activity"/>
    <property type="evidence" value="ECO:0007669"/>
    <property type="project" value="TreeGrafter"/>
</dbReference>
<dbReference type="CDD" id="cd01335">
    <property type="entry name" value="Radical_SAM"/>
    <property type="match status" value="1"/>
</dbReference>
<dbReference type="FunFam" id="3.40.50.12160:FF:000001">
    <property type="entry name" value="tRNA-2-methylthio-N(6)-dimethylallyladenosine synthase"/>
    <property type="match status" value="1"/>
</dbReference>
<dbReference type="FunFam" id="3.80.30.20:FF:000001">
    <property type="entry name" value="tRNA-2-methylthio-N(6)-dimethylallyladenosine synthase 2"/>
    <property type="match status" value="1"/>
</dbReference>
<dbReference type="Gene3D" id="3.40.50.12160">
    <property type="entry name" value="Methylthiotransferase, N-terminal domain"/>
    <property type="match status" value="1"/>
</dbReference>
<dbReference type="Gene3D" id="3.80.30.20">
    <property type="entry name" value="tm_1862 like domain"/>
    <property type="match status" value="1"/>
</dbReference>
<dbReference type="HAMAP" id="MF_01864">
    <property type="entry name" value="tRNA_metthiotr_MiaB"/>
    <property type="match status" value="1"/>
</dbReference>
<dbReference type="InterPro" id="IPR006638">
    <property type="entry name" value="Elp3/MiaA/NifB-like_rSAM"/>
</dbReference>
<dbReference type="InterPro" id="IPR005839">
    <property type="entry name" value="Methylthiotransferase"/>
</dbReference>
<dbReference type="InterPro" id="IPR020612">
    <property type="entry name" value="Methylthiotransferase_CS"/>
</dbReference>
<dbReference type="InterPro" id="IPR013848">
    <property type="entry name" value="Methylthiotransferase_N"/>
</dbReference>
<dbReference type="InterPro" id="IPR038135">
    <property type="entry name" value="Methylthiotransferase_N_sf"/>
</dbReference>
<dbReference type="InterPro" id="IPR006463">
    <property type="entry name" value="MiaB_methiolase"/>
</dbReference>
<dbReference type="InterPro" id="IPR007197">
    <property type="entry name" value="rSAM"/>
</dbReference>
<dbReference type="InterPro" id="IPR023404">
    <property type="entry name" value="rSAM_horseshoe"/>
</dbReference>
<dbReference type="InterPro" id="IPR002792">
    <property type="entry name" value="TRAM_dom"/>
</dbReference>
<dbReference type="NCBIfam" id="TIGR01574">
    <property type="entry name" value="miaB-methiolase"/>
    <property type="match status" value="1"/>
</dbReference>
<dbReference type="NCBIfam" id="TIGR00089">
    <property type="entry name" value="MiaB/RimO family radical SAM methylthiotransferase"/>
    <property type="match status" value="1"/>
</dbReference>
<dbReference type="PANTHER" id="PTHR43020">
    <property type="entry name" value="CDK5 REGULATORY SUBUNIT-ASSOCIATED PROTEIN 1"/>
    <property type="match status" value="1"/>
</dbReference>
<dbReference type="PANTHER" id="PTHR43020:SF2">
    <property type="entry name" value="MITOCHONDRIAL TRNA METHYLTHIOTRANSFERASE CDK5RAP1"/>
    <property type="match status" value="1"/>
</dbReference>
<dbReference type="Pfam" id="PF04055">
    <property type="entry name" value="Radical_SAM"/>
    <property type="match status" value="1"/>
</dbReference>
<dbReference type="Pfam" id="PF01938">
    <property type="entry name" value="TRAM"/>
    <property type="match status" value="1"/>
</dbReference>
<dbReference type="Pfam" id="PF00919">
    <property type="entry name" value="UPF0004"/>
    <property type="match status" value="1"/>
</dbReference>
<dbReference type="SFLD" id="SFLDF00273">
    <property type="entry name" value="(dimethylallyl)adenosine_tRNA"/>
    <property type="match status" value="1"/>
</dbReference>
<dbReference type="SFLD" id="SFLDG01082">
    <property type="entry name" value="B12-binding_domain_containing"/>
    <property type="match status" value="1"/>
</dbReference>
<dbReference type="SFLD" id="SFLDS00029">
    <property type="entry name" value="Radical_SAM"/>
    <property type="match status" value="1"/>
</dbReference>
<dbReference type="SMART" id="SM00729">
    <property type="entry name" value="Elp3"/>
    <property type="match status" value="1"/>
</dbReference>
<dbReference type="SUPFAM" id="SSF102114">
    <property type="entry name" value="Radical SAM enzymes"/>
    <property type="match status" value="1"/>
</dbReference>
<dbReference type="PROSITE" id="PS51449">
    <property type="entry name" value="MTTASE_N"/>
    <property type="match status" value="1"/>
</dbReference>
<dbReference type="PROSITE" id="PS01278">
    <property type="entry name" value="MTTASE_RADICAL"/>
    <property type="match status" value="1"/>
</dbReference>
<dbReference type="PROSITE" id="PS51918">
    <property type="entry name" value="RADICAL_SAM"/>
    <property type="match status" value="1"/>
</dbReference>
<dbReference type="PROSITE" id="PS50926">
    <property type="entry name" value="TRAM"/>
    <property type="match status" value="1"/>
</dbReference>
<keyword id="KW-0004">4Fe-4S</keyword>
<keyword id="KW-0963">Cytoplasm</keyword>
<keyword id="KW-0408">Iron</keyword>
<keyword id="KW-0411">Iron-sulfur</keyword>
<keyword id="KW-0479">Metal-binding</keyword>
<keyword id="KW-1185">Reference proteome</keyword>
<keyword id="KW-0949">S-adenosyl-L-methionine</keyword>
<keyword id="KW-0808">Transferase</keyword>
<keyword id="KW-0819">tRNA processing</keyword>
<gene>
    <name evidence="1" type="primary">miaB</name>
    <name type="ordered locus">plu1312</name>
</gene>
<reference key="1">
    <citation type="journal article" date="2003" name="Nat. Biotechnol.">
        <title>The genome sequence of the entomopathogenic bacterium Photorhabdus luminescens.</title>
        <authorList>
            <person name="Duchaud E."/>
            <person name="Rusniok C."/>
            <person name="Frangeul L."/>
            <person name="Buchrieser C."/>
            <person name="Givaudan A."/>
            <person name="Taourit S."/>
            <person name="Bocs S."/>
            <person name="Boursaux-Eude C."/>
            <person name="Chandler M."/>
            <person name="Charles J.-F."/>
            <person name="Dassa E."/>
            <person name="Derose R."/>
            <person name="Derzelle S."/>
            <person name="Freyssinet G."/>
            <person name="Gaudriault S."/>
            <person name="Medigue C."/>
            <person name="Lanois A."/>
            <person name="Powell K."/>
            <person name="Siguier P."/>
            <person name="Vincent R."/>
            <person name="Wingate V."/>
            <person name="Zouine M."/>
            <person name="Glaser P."/>
            <person name="Boemare N."/>
            <person name="Danchin A."/>
            <person name="Kunst F."/>
        </authorList>
    </citation>
    <scope>NUCLEOTIDE SEQUENCE [LARGE SCALE GENOMIC DNA]</scope>
    <source>
        <strain>DSM 15139 / CIP 105565 / TT01</strain>
    </source>
</reference>
<name>MIAB_PHOLL</name>
<protein>
    <recommendedName>
        <fullName evidence="1">tRNA-2-methylthio-N(6)-dimethylallyladenosine synthase</fullName>
        <ecNumber evidence="1">2.8.4.3</ecNumber>
    </recommendedName>
    <alternativeName>
        <fullName evidence="1">(Dimethylallyl)adenosine tRNA methylthiotransferase MiaB</fullName>
    </alternativeName>
    <alternativeName>
        <fullName evidence="1">tRNA-i(6)A37 methylthiotransferase</fullName>
    </alternativeName>
</protein>